<reference key="1">
    <citation type="journal article" date="2002" name="DNA Res.">
        <title>Complete genomic sequence of nitrogen-fixing symbiotic bacterium Bradyrhizobium japonicum USDA110.</title>
        <authorList>
            <person name="Kaneko T."/>
            <person name="Nakamura Y."/>
            <person name="Sato S."/>
            <person name="Minamisawa K."/>
            <person name="Uchiumi T."/>
            <person name="Sasamoto S."/>
            <person name="Watanabe A."/>
            <person name="Idesawa K."/>
            <person name="Iriguchi M."/>
            <person name="Kawashima K."/>
            <person name="Kohara M."/>
            <person name="Matsumoto M."/>
            <person name="Shimpo S."/>
            <person name="Tsuruoka H."/>
            <person name="Wada T."/>
            <person name="Yamada M."/>
            <person name="Tabata S."/>
        </authorList>
    </citation>
    <scope>NUCLEOTIDE SEQUENCE [LARGE SCALE GENOMIC DNA]</scope>
    <source>
        <strain>JCM 10833 / BCRC 13528 / IAM 13628 / NBRC 14792 / USDA 110</strain>
    </source>
</reference>
<reference key="2">
    <citation type="journal article" date="1998" name="Mol. Plant Microbe Interact.">
        <title>The Bradyrhizobium japonicum noeD gene: a negatively acting, genotype-specific nodulation gene for soybean.</title>
        <authorList>
            <person name="Lohrke S.M."/>
            <person name="Day B."/>
            <person name="Kolli V.S."/>
            <person name="Hancock R."/>
            <person name="Yuen J.P."/>
            <person name="de Souza M.L."/>
            <person name="Stacey G."/>
            <person name="Carlson R."/>
            <person name="Tong Z."/>
            <person name="Hur H.G."/>
            <person name="Orf J.H."/>
            <person name="Sadowsky M.J."/>
        </authorList>
    </citation>
    <scope>NUCLEOTIDE SEQUENCE [GENOMIC DNA] OF 328-608</scope>
    <source>
        <strain>JCM 10833 / BCRC 13528 / IAM 13628 / NBRC 14792 / USDA 110</strain>
    </source>
</reference>
<name>NODM_BRADU</name>
<gene>
    <name type="primary">nodM</name>
    <name type="ordered locus">blr1632</name>
</gene>
<keyword id="KW-0032">Aminotransferase</keyword>
<keyword id="KW-0963">Cytoplasm</keyword>
<keyword id="KW-0315">Glutamine amidotransferase</keyword>
<keyword id="KW-0536">Nodulation</keyword>
<keyword id="KW-1185">Reference proteome</keyword>
<keyword id="KW-0677">Repeat</keyword>
<keyword id="KW-0808">Transferase</keyword>
<sequence length="608" mass="65390">MCGIVGILGRGPVVDKLVASLRRLEYRGYDSAGLATLEGVRIERRRAEGKLRNLEEQLRYCPPSGHAGIGHTRWATHGKPTESNAHPHATENVAVVHNGIIENFRELRAELERNGAGFNSETDTEVVAHLVDSYLKNGYSPQDAVQASLPRLRGAFALAFLFKANDDLLIGACKGSPLAIGHGRGEVYLGSDAIALAPLTDTVTYLEDGDWAVLTRATCVIYGADGSIVQRETSKSGVSALLVDKANYRHFMAKEIHEQPTVAGKTLAHYLDVAAKRVALPLALPFDFNCIQRISITACGTASYAGHIAKYWFERLARLPCDVDVASEFRYREAPLRRGDLAIVISQSGETADTLAALRYAKGKGLHTISVVNVPTSTIARESESVLPTLAGPEIGVASTKAFICQLMVLGVLAVRAAKERGKLSEIDESQLVRELIEVPRLIAAALLVEPQIEKLARYIAGARTVLYLGRGTSAPLALEGALKLKEISYIHSEGYAAGELKHGPIALIDEAVPVVVIAPYDEVFEKTVSNMQEVAARGGKIILITDAKGASEAMVDTLLTIVLPAMVASFTPLVYAIPVQLLAYHTAVARGADVDQPRNLAKSVTVE</sequence>
<comment type="function">
    <text evidence="1">Involved in the production of the root hair deformation (HAD) factor specifically on soybean.</text>
</comment>
<comment type="catalytic activity">
    <reaction>
        <text>D-fructose 6-phosphate + L-glutamine = D-glucosamine 6-phosphate + L-glutamate</text>
        <dbReference type="Rhea" id="RHEA:13237"/>
        <dbReference type="ChEBI" id="CHEBI:29985"/>
        <dbReference type="ChEBI" id="CHEBI:58359"/>
        <dbReference type="ChEBI" id="CHEBI:58725"/>
        <dbReference type="ChEBI" id="CHEBI:61527"/>
        <dbReference type="EC" id="2.6.1.16"/>
    </reaction>
</comment>
<comment type="subcellular location">
    <subcellularLocation>
        <location evidence="1">Cytoplasm</location>
    </subcellularLocation>
</comment>
<accession>P94323</accession>
<protein>
    <recommendedName>
        <fullName>Glutamine--fructose-6-phosphate aminotransferase [isomerizing]</fullName>
        <shortName>GFAT</shortName>
        <ecNumber>2.6.1.16</ecNumber>
    </recommendedName>
    <alternativeName>
        <fullName>Nodulation protein M</fullName>
    </alternativeName>
</protein>
<evidence type="ECO:0000250" key="1"/>
<evidence type="ECO:0000305" key="2"/>
<dbReference type="EC" id="2.6.1.16"/>
<dbReference type="EMBL" id="BA000040">
    <property type="protein sequence ID" value="BAC46897.1"/>
    <property type="molecule type" value="Genomic_DNA"/>
</dbReference>
<dbReference type="EMBL" id="U67278">
    <property type="protein sequence ID" value="AAB39494.1"/>
    <property type="molecule type" value="Genomic_DNA"/>
</dbReference>
<dbReference type="RefSeq" id="NP_768272.1">
    <property type="nucleotide sequence ID" value="NC_004463.1"/>
</dbReference>
<dbReference type="SMR" id="P94323"/>
<dbReference type="FunCoup" id="P94323">
    <property type="interactions" value="561"/>
</dbReference>
<dbReference type="STRING" id="224911.AAV28_05065"/>
<dbReference type="EnsemblBacteria" id="BAC46897">
    <property type="protein sequence ID" value="BAC46897"/>
    <property type="gene ID" value="BAC46897"/>
</dbReference>
<dbReference type="KEGG" id="bja:blr1632"/>
<dbReference type="PATRIC" id="fig|224911.44.peg.1076"/>
<dbReference type="eggNOG" id="COG0449">
    <property type="taxonomic scope" value="Bacteria"/>
</dbReference>
<dbReference type="HOGENOM" id="CLU_012520_5_2_5"/>
<dbReference type="InParanoid" id="P94323"/>
<dbReference type="OrthoDB" id="9761808at2"/>
<dbReference type="PhylomeDB" id="P94323"/>
<dbReference type="Proteomes" id="UP000002526">
    <property type="component" value="Chromosome"/>
</dbReference>
<dbReference type="GO" id="GO:0005829">
    <property type="term" value="C:cytosol"/>
    <property type="evidence" value="ECO:0000318"/>
    <property type="project" value="GO_Central"/>
</dbReference>
<dbReference type="GO" id="GO:0097367">
    <property type="term" value="F:carbohydrate derivative binding"/>
    <property type="evidence" value="ECO:0007669"/>
    <property type="project" value="InterPro"/>
</dbReference>
<dbReference type="GO" id="GO:0004360">
    <property type="term" value="F:glutamine-fructose-6-phosphate transaminase (isomerizing) activity"/>
    <property type="evidence" value="ECO:0000318"/>
    <property type="project" value="GO_Central"/>
</dbReference>
<dbReference type="GO" id="GO:0005975">
    <property type="term" value="P:carbohydrate metabolic process"/>
    <property type="evidence" value="ECO:0007669"/>
    <property type="project" value="UniProtKB-UniRule"/>
</dbReference>
<dbReference type="GO" id="GO:0006002">
    <property type="term" value="P:fructose 6-phosphate metabolic process"/>
    <property type="evidence" value="ECO:0000318"/>
    <property type="project" value="GO_Central"/>
</dbReference>
<dbReference type="GO" id="GO:0006487">
    <property type="term" value="P:protein N-linked glycosylation"/>
    <property type="evidence" value="ECO:0000318"/>
    <property type="project" value="GO_Central"/>
</dbReference>
<dbReference type="GO" id="GO:0006047">
    <property type="term" value="P:UDP-N-acetylglucosamine metabolic process"/>
    <property type="evidence" value="ECO:0000318"/>
    <property type="project" value="GO_Central"/>
</dbReference>
<dbReference type="CDD" id="cd00714">
    <property type="entry name" value="GFAT"/>
    <property type="match status" value="1"/>
</dbReference>
<dbReference type="CDD" id="cd05008">
    <property type="entry name" value="SIS_GlmS_GlmD_1"/>
    <property type="match status" value="1"/>
</dbReference>
<dbReference type="CDD" id="cd05009">
    <property type="entry name" value="SIS_GlmS_GlmD_2"/>
    <property type="match status" value="1"/>
</dbReference>
<dbReference type="FunFam" id="3.40.50.10490:FF:000001">
    <property type="entry name" value="Glutamine--fructose-6-phosphate aminotransferase [isomerizing]"/>
    <property type="match status" value="1"/>
</dbReference>
<dbReference type="FunFam" id="3.40.50.10490:FF:000002">
    <property type="entry name" value="Glutamine--fructose-6-phosphate aminotransferase [isomerizing]"/>
    <property type="match status" value="1"/>
</dbReference>
<dbReference type="FunFam" id="3.60.20.10:FF:000006">
    <property type="entry name" value="Glutamine--fructose-6-phosphate aminotransferase [isomerizing]"/>
    <property type="match status" value="1"/>
</dbReference>
<dbReference type="Gene3D" id="3.40.50.10490">
    <property type="entry name" value="Glucose-6-phosphate isomerase like protein, domain 1"/>
    <property type="match status" value="2"/>
</dbReference>
<dbReference type="Gene3D" id="3.60.20.10">
    <property type="entry name" value="Glutamine Phosphoribosylpyrophosphate, subunit 1, domain 1"/>
    <property type="match status" value="1"/>
</dbReference>
<dbReference type="HAMAP" id="MF_00164">
    <property type="entry name" value="GlmS"/>
    <property type="match status" value="1"/>
</dbReference>
<dbReference type="InterPro" id="IPR017932">
    <property type="entry name" value="GATase_2_dom"/>
</dbReference>
<dbReference type="InterPro" id="IPR005855">
    <property type="entry name" value="GFAT"/>
</dbReference>
<dbReference type="InterPro" id="IPR047084">
    <property type="entry name" value="GFAT_N"/>
</dbReference>
<dbReference type="InterPro" id="IPR035466">
    <property type="entry name" value="GlmS/AgaS_SIS"/>
</dbReference>
<dbReference type="InterPro" id="IPR035490">
    <property type="entry name" value="GlmS/FrlB_SIS"/>
</dbReference>
<dbReference type="InterPro" id="IPR029055">
    <property type="entry name" value="Ntn_hydrolases_N"/>
</dbReference>
<dbReference type="InterPro" id="IPR001347">
    <property type="entry name" value="SIS_dom"/>
</dbReference>
<dbReference type="InterPro" id="IPR046348">
    <property type="entry name" value="SIS_dom_sf"/>
</dbReference>
<dbReference type="NCBIfam" id="TIGR01135">
    <property type="entry name" value="glmS"/>
    <property type="match status" value="1"/>
</dbReference>
<dbReference type="NCBIfam" id="NF001484">
    <property type="entry name" value="PRK00331.1"/>
    <property type="match status" value="1"/>
</dbReference>
<dbReference type="PANTHER" id="PTHR10937">
    <property type="entry name" value="GLUCOSAMINE--FRUCTOSE-6-PHOSPHATE AMINOTRANSFERASE, ISOMERIZING"/>
    <property type="match status" value="1"/>
</dbReference>
<dbReference type="PANTHER" id="PTHR10937:SF0">
    <property type="entry name" value="GLUTAMINE--FRUCTOSE-6-PHOSPHATE TRANSAMINASE (ISOMERIZING)"/>
    <property type="match status" value="1"/>
</dbReference>
<dbReference type="Pfam" id="PF13522">
    <property type="entry name" value="GATase_6"/>
    <property type="match status" value="1"/>
</dbReference>
<dbReference type="Pfam" id="PF01380">
    <property type="entry name" value="SIS"/>
    <property type="match status" value="2"/>
</dbReference>
<dbReference type="SUPFAM" id="SSF56235">
    <property type="entry name" value="N-terminal nucleophile aminohydrolases (Ntn hydrolases)"/>
    <property type="match status" value="1"/>
</dbReference>
<dbReference type="SUPFAM" id="SSF53697">
    <property type="entry name" value="SIS domain"/>
    <property type="match status" value="1"/>
</dbReference>
<dbReference type="PROSITE" id="PS51278">
    <property type="entry name" value="GATASE_TYPE_2"/>
    <property type="match status" value="1"/>
</dbReference>
<dbReference type="PROSITE" id="PS51464">
    <property type="entry name" value="SIS"/>
    <property type="match status" value="2"/>
</dbReference>
<proteinExistence type="inferred from homology"/>
<feature type="initiator methionine" description="Removed" evidence="1">
    <location>
        <position position="1"/>
    </location>
</feature>
<feature type="chain" id="PRO_0000135434" description="Glutamine--fructose-6-phosphate aminotransferase [isomerizing]">
    <location>
        <begin position="2"/>
        <end position="608"/>
    </location>
</feature>
<feature type="domain" description="Glutamine amidotransferase type-2">
    <location>
        <begin position="2"/>
        <end position="217"/>
    </location>
</feature>
<feature type="domain" description="SIS 1">
    <location>
        <begin position="284"/>
        <end position="423"/>
    </location>
</feature>
<feature type="domain" description="SIS 2">
    <location>
        <begin position="456"/>
        <end position="598"/>
    </location>
</feature>
<feature type="active site" description="Nucleophile; for GATase activity" evidence="1">
    <location>
        <position position="2"/>
    </location>
</feature>
<feature type="active site" description="For Fru-6P isomerization activity" evidence="1">
    <location>
        <position position="603"/>
    </location>
</feature>
<feature type="sequence conflict" description="In Ref. 2; AAB39494." evidence="2" ref="2">
    <original>Y</original>
    <variation>N</variation>
    <location>
        <position position="331"/>
    </location>
</feature>
<feature type="sequence conflict" description="In Ref. 2; AAB39494." evidence="2" ref="2">
    <original>PLRRGDL</original>
    <variation>LAPRQF</variation>
    <location>
        <begin position="335"/>
        <end position="341"/>
    </location>
</feature>
<feature type="sequence conflict" description="In Ref. 2; AAB39494." evidence="2" ref="2">
    <original>S</original>
    <variation>L</variation>
    <location>
        <position position="346"/>
    </location>
</feature>
<organism>
    <name type="scientific">Bradyrhizobium diazoefficiens (strain JCM 10833 / BCRC 13528 / IAM 13628 / NBRC 14792 / USDA 110)</name>
    <dbReference type="NCBI Taxonomy" id="224911"/>
    <lineage>
        <taxon>Bacteria</taxon>
        <taxon>Pseudomonadati</taxon>
        <taxon>Pseudomonadota</taxon>
        <taxon>Alphaproteobacteria</taxon>
        <taxon>Hyphomicrobiales</taxon>
        <taxon>Nitrobacteraceae</taxon>
        <taxon>Bradyrhizobium</taxon>
    </lineage>
</organism>